<sequence length="443" mass="49045">MKEIGALQAEYPLVNKLIATEEVFWINPHIEKYERAIKDSPLNEENVKDAEERLKRFAPYIAKVFPETKGTNGIIESPLVKISSMKEALETTYKQPISGELLLKCDSHLPISGSIKARGGIYEVLKYAEQLALQHGMLTEEDDYSILDSDTCREFFAKHSIAVGSTGNLGLSIGIMSANLGFNVTVHMSADAKEWKKDLLRSKGVNVIEYEDDYSKAVEEGRRQADADPSCYFVDDENSHDLFLGYAVAASRLQKQLEELEVVVDKDHPLFVYLPCGVGGGPGGVAFGLKLLYKDNVHCFFAEPTHSPCMLLGLMTGLHDKIAVQDIGIDNVTDADGLAVGRPSGFVGKTMEPFLSGNYTVSDEELYRLLKELADTENIYLEPSALAGMIGPVKVCKEDEYLQKQQLTEKVKKGTHIVWGTGGSMVPKDVMNEYYRKGLELTV</sequence>
<reference key="1">
    <citation type="submission" date="2008-10" db="EMBL/GenBank/DDBJ databases">
        <title>Genome sequence of Bacillus cereus B4264.</title>
        <authorList>
            <person name="Dodson R.J."/>
            <person name="Durkin A.S."/>
            <person name="Rosovitz M.J."/>
            <person name="Rasko D.A."/>
            <person name="Hoffmaster A."/>
            <person name="Ravel J."/>
            <person name="Sutton G."/>
        </authorList>
    </citation>
    <scope>NUCLEOTIDE SEQUENCE [LARGE SCALE GENOMIC DNA]</scope>
    <source>
        <strain>B4264</strain>
    </source>
</reference>
<feature type="chain" id="PRO_1000135756" description="Probable D-serine dehydratase">
    <location>
        <begin position="1"/>
        <end position="443"/>
    </location>
</feature>
<feature type="modified residue" description="N6-(pyridoxal phosphate)lysine" evidence="1">
    <location>
        <position position="116"/>
    </location>
</feature>
<organism>
    <name type="scientific">Bacillus cereus (strain B4264)</name>
    <dbReference type="NCBI Taxonomy" id="405532"/>
    <lineage>
        <taxon>Bacteria</taxon>
        <taxon>Bacillati</taxon>
        <taxon>Bacillota</taxon>
        <taxon>Bacilli</taxon>
        <taxon>Bacillales</taxon>
        <taxon>Bacillaceae</taxon>
        <taxon>Bacillus</taxon>
        <taxon>Bacillus cereus group</taxon>
    </lineage>
</organism>
<comment type="catalytic activity">
    <reaction evidence="1">
        <text>D-serine = pyruvate + NH4(+)</text>
        <dbReference type="Rhea" id="RHEA:13977"/>
        <dbReference type="ChEBI" id="CHEBI:15361"/>
        <dbReference type="ChEBI" id="CHEBI:28938"/>
        <dbReference type="ChEBI" id="CHEBI:35247"/>
        <dbReference type="EC" id="4.3.1.18"/>
    </reaction>
</comment>
<comment type="cofactor">
    <cofactor evidence="1">
        <name>pyridoxal 5'-phosphate</name>
        <dbReference type="ChEBI" id="CHEBI:597326"/>
    </cofactor>
</comment>
<comment type="similarity">
    <text evidence="1">Belongs to the serine/threonine dehydratase family. DsdA subfamily.</text>
</comment>
<proteinExistence type="inferred from homology"/>
<dbReference type="EC" id="4.3.1.18" evidence="1"/>
<dbReference type="EMBL" id="CP001176">
    <property type="protein sequence ID" value="ACK62184.1"/>
    <property type="molecule type" value="Genomic_DNA"/>
</dbReference>
<dbReference type="RefSeq" id="WP_000658530.1">
    <property type="nucleotide sequence ID" value="NZ_VEHB01000003.1"/>
</dbReference>
<dbReference type="SMR" id="B7HID8"/>
<dbReference type="KEGG" id="bcb:BCB4264_A1796"/>
<dbReference type="HOGENOM" id="CLU_035707_0_0_9"/>
<dbReference type="Proteomes" id="UP000007096">
    <property type="component" value="Chromosome"/>
</dbReference>
<dbReference type="GO" id="GO:0008721">
    <property type="term" value="F:D-serine ammonia-lyase activity"/>
    <property type="evidence" value="ECO:0007669"/>
    <property type="project" value="UniProtKB-EC"/>
</dbReference>
<dbReference type="GO" id="GO:0016836">
    <property type="term" value="F:hydro-lyase activity"/>
    <property type="evidence" value="ECO:0007669"/>
    <property type="project" value="UniProtKB-UniRule"/>
</dbReference>
<dbReference type="GO" id="GO:0030170">
    <property type="term" value="F:pyridoxal phosphate binding"/>
    <property type="evidence" value="ECO:0007669"/>
    <property type="project" value="InterPro"/>
</dbReference>
<dbReference type="GO" id="GO:0036088">
    <property type="term" value="P:D-serine catabolic process"/>
    <property type="evidence" value="ECO:0007669"/>
    <property type="project" value="TreeGrafter"/>
</dbReference>
<dbReference type="GO" id="GO:0009097">
    <property type="term" value="P:isoleucine biosynthetic process"/>
    <property type="evidence" value="ECO:0007669"/>
    <property type="project" value="TreeGrafter"/>
</dbReference>
<dbReference type="CDD" id="cd06447">
    <property type="entry name" value="D-Ser-dehyd"/>
    <property type="match status" value="1"/>
</dbReference>
<dbReference type="FunFam" id="3.40.50.1100:FF:000018">
    <property type="entry name" value="D-serine dehydratase"/>
    <property type="match status" value="1"/>
</dbReference>
<dbReference type="Gene3D" id="3.40.50.1100">
    <property type="match status" value="2"/>
</dbReference>
<dbReference type="HAMAP" id="MF_01030">
    <property type="entry name" value="D_Ser_dehydrat"/>
    <property type="match status" value="1"/>
</dbReference>
<dbReference type="InterPro" id="IPR011780">
    <property type="entry name" value="D_Ser_am_lyase"/>
</dbReference>
<dbReference type="InterPro" id="IPR050147">
    <property type="entry name" value="Ser/Thr_Dehydratase"/>
</dbReference>
<dbReference type="InterPro" id="IPR000634">
    <property type="entry name" value="Ser/Thr_deHydtase_PyrdxlP-BS"/>
</dbReference>
<dbReference type="InterPro" id="IPR001926">
    <property type="entry name" value="TrpB-like_PALP"/>
</dbReference>
<dbReference type="InterPro" id="IPR036052">
    <property type="entry name" value="TrpB-like_PALP_sf"/>
</dbReference>
<dbReference type="NCBIfam" id="TIGR02035">
    <property type="entry name" value="D_Ser_am_lyase"/>
    <property type="match status" value="1"/>
</dbReference>
<dbReference type="NCBIfam" id="NF002823">
    <property type="entry name" value="PRK02991.1"/>
    <property type="match status" value="1"/>
</dbReference>
<dbReference type="PANTHER" id="PTHR48078:SF9">
    <property type="entry name" value="D-SERINE DEHYDRATASE"/>
    <property type="match status" value="1"/>
</dbReference>
<dbReference type="PANTHER" id="PTHR48078">
    <property type="entry name" value="THREONINE DEHYDRATASE, MITOCHONDRIAL-RELATED"/>
    <property type="match status" value="1"/>
</dbReference>
<dbReference type="Pfam" id="PF00291">
    <property type="entry name" value="PALP"/>
    <property type="match status" value="1"/>
</dbReference>
<dbReference type="SUPFAM" id="SSF53686">
    <property type="entry name" value="Tryptophan synthase beta subunit-like PLP-dependent enzymes"/>
    <property type="match status" value="1"/>
</dbReference>
<dbReference type="PROSITE" id="PS00165">
    <property type="entry name" value="DEHYDRATASE_SER_THR"/>
    <property type="match status" value="1"/>
</dbReference>
<protein>
    <recommendedName>
        <fullName evidence="1">Probable D-serine dehydratase</fullName>
        <ecNumber evidence="1">4.3.1.18</ecNumber>
    </recommendedName>
    <alternativeName>
        <fullName evidence="1">D-serine deaminase</fullName>
        <shortName evidence="1">DSD</shortName>
    </alternativeName>
</protein>
<keyword id="KW-0456">Lyase</keyword>
<keyword id="KW-0663">Pyridoxal phosphate</keyword>
<evidence type="ECO:0000255" key="1">
    <source>
        <dbReference type="HAMAP-Rule" id="MF_01030"/>
    </source>
</evidence>
<accession>B7HID8</accession>
<gene>
    <name evidence="1" type="primary">dsdA</name>
    <name type="ordered locus">BCB4264_A1796</name>
</gene>
<name>SDHD_BACC4</name>